<accession>A8A072</accession>
<dbReference type="EC" id="2.1.1.144" evidence="1"/>
<dbReference type="EMBL" id="CP000802">
    <property type="protein sequence ID" value="ABV05926.1"/>
    <property type="molecule type" value="Genomic_DNA"/>
</dbReference>
<dbReference type="RefSeq" id="WP_001286591.1">
    <property type="nucleotide sequence ID" value="NC_009800.1"/>
</dbReference>
<dbReference type="SMR" id="A8A072"/>
<dbReference type="KEGG" id="ecx:EcHS_A1601"/>
<dbReference type="HOGENOM" id="CLU_037990_5_2_6"/>
<dbReference type="GO" id="GO:0005737">
    <property type="term" value="C:cytoplasm"/>
    <property type="evidence" value="ECO:0007669"/>
    <property type="project" value="UniProtKB-SubCell"/>
</dbReference>
<dbReference type="GO" id="GO:0030798">
    <property type="term" value="F:trans-aconitate 2-methyltransferase activity"/>
    <property type="evidence" value="ECO:0007669"/>
    <property type="project" value="UniProtKB-UniRule"/>
</dbReference>
<dbReference type="GO" id="GO:0032259">
    <property type="term" value="P:methylation"/>
    <property type="evidence" value="ECO:0007669"/>
    <property type="project" value="UniProtKB-KW"/>
</dbReference>
<dbReference type="CDD" id="cd02440">
    <property type="entry name" value="AdoMet_MTases"/>
    <property type="match status" value="1"/>
</dbReference>
<dbReference type="Gene3D" id="1.10.150.290">
    <property type="entry name" value="S-adenosyl-L-methionine-dependent methyltransferases"/>
    <property type="match status" value="1"/>
</dbReference>
<dbReference type="Gene3D" id="3.40.50.150">
    <property type="entry name" value="Vaccinia Virus protein VP39"/>
    <property type="match status" value="1"/>
</dbReference>
<dbReference type="HAMAP" id="MF_00560">
    <property type="entry name" value="Tran_acon_Me_trans"/>
    <property type="match status" value="1"/>
</dbReference>
<dbReference type="InterPro" id="IPR041698">
    <property type="entry name" value="Methyltransf_25"/>
</dbReference>
<dbReference type="InterPro" id="IPR029063">
    <property type="entry name" value="SAM-dependent_MTases_sf"/>
</dbReference>
<dbReference type="InterPro" id="IPR023506">
    <property type="entry name" value="Trans-aconitate_MeTrfase"/>
</dbReference>
<dbReference type="InterPro" id="IPR023149">
    <property type="entry name" value="Trans_acon_MeTrfase_C"/>
</dbReference>
<dbReference type="NCBIfam" id="NF002463">
    <property type="entry name" value="PRK01683.1"/>
    <property type="match status" value="1"/>
</dbReference>
<dbReference type="PANTHER" id="PTHR43861:SF1">
    <property type="entry name" value="TRANS-ACONITATE 2-METHYLTRANSFERASE"/>
    <property type="match status" value="1"/>
</dbReference>
<dbReference type="PANTHER" id="PTHR43861">
    <property type="entry name" value="TRANS-ACONITATE 2-METHYLTRANSFERASE-RELATED"/>
    <property type="match status" value="1"/>
</dbReference>
<dbReference type="Pfam" id="PF13649">
    <property type="entry name" value="Methyltransf_25"/>
    <property type="match status" value="1"/>
</dbReference>
<dbReference type="SUPFAM" id="SSF53335">
    <property type="entry name" value="S-adenosyl-L-methionine-dependent methyltransferases"/>
    <property type="match status" value="1"/>
</dbReference>
<organism>
    <name type="scientific">Escherichia coli O9:H4 (strain HS)</name>
    <dbReference type="NCBI Taxonomy" id="331112"/>
    <lineage>
        <taxon>Bacteria</taxon>
        <taxon>Pseudomonadati</taxon>
        <taxon>Pseudomonadota</taxon>
        <taxon>Gammaproteobacteria</taxon>
        <taxon>Enterobacterales</taxon>
        <taxon>Enterobacteriaceae</taxon>
        <taxon>Escherichia</taxon>
    </lineage>
</organism>
<protein>
    <recommendedName>
        <fullName evidence="1">Trans-aconitate 2-methyltransferase</fullName>
        <ecNumber evidence="1">2.1.1.144</ecNumber>
    </recommendedName>
</protein>
<comment type="function">
    <text evidence="1">Catalyzes the S-adenosylmethionine monomethyl esterification of trans-aconitate.</text>
</comment>
<comment type="catalytic activity">
    <reaction evidence="1">
        <text>trans-aconitate + S-adenosyl-L-methionine = (E)-3-(methoxycarbonyl)pent-2-enedioate + S-adenosyl-L-homocysteine</text>
        <dbReference type="Rhea" id="RHEA:14969"/>
        <dbReference type="ChEBI" id="CHEBI:15708"/>
        <dbReference type="ChEBI" id="CHEBI:57470"/>
        <dbReference type="ChEBI" id="CHEBI:57856"/>
        <dbReference type="ChEBI" id="CHEBI:59789"/>
        <dbReference type="EC" id="2.1.1.144"/>
    </reaction>
</comment>
<comment type="subcellular location">
    <subcellularLocation>
        <location evidence="1">Cytoplasm</location>
    </subcellularLocation>
</comment>
<comment type="similarity">
    <text evidence="1">Belongs to the methyltransferase superfamily. Tam family.</text>
</comment>
<feature type="chain" id="PRO_1000061121" description="Trans-aconitate 2-methyltransferase">
    <location>
        <begin position="1"/>
        <end position="252"/>
    </location>
</feature>
<proteinExistence type="inferred from homology"/>
<sequence length="252" mass="29064">MSDWNPSLYLHFSAERSRPAVELLARVPLENVEYVADLGCGPDNSTALLQQRWPAARITGIDSSPAMIAEARSALPDCQFVEADIRNWQPVQALDLIFANASLQWLPDHYELFPHLVSLLNPQGVLAVQMPDNWLEPTHVLMREVAWEQNYPDRGREPLAGVHAYYDILSEAGCEVDIWRTTYYHQMPSHQAIIDWVTATGLRPWLQDLTESEQQLFLKRYHQMLEEQYPLQENGQILLAFPRLFIVARRME</sequence>
<keyword id="KW-0963">Cytoplasm</keyword>
<keyword id="KW-0489">Methyltransferase</keyword>
<keyword id="KW-0949">S-adenosyl-L-methionine</keyword>
<keyword id="KW-0808">Transferase</keyword>
<reference key="1">
    <citation type="journal article" date="2008" name="J. Bacteriol.">
        <title>The pangenome structure of Escherichia coli: comparative genomic analysis of E. coli commensal and pathogenic isolates.</title>
        <authorList>
            <person name="Rasko D.A."/>
            <person name="Rosovitz M.J."/>
            <person name="Myers G.S.A."/>
            <person name="Mongodin E.F."/>
            <person name="Fricke W.F."/>
            <person name="Gajer P."/>
            <person name="Crabtree J."/>
            <person name="Sebaihia M."/>
            <person name="Thomson N.R."/>
            <person name="Chaudhuri R."/>
            <person name="Henderson I.R."/>
            <person name="Sperandio V."/>
            <person name="Ravel J."/>
        </authorList>
    </citation>
    <scope>NUCLEOTIDE SEQUENCE [LARGE SCALE GENOMIC DNA]</scope>
    <source>
        <strain>HS</strain>
    </source>
</reference>
<name>TAM_ECOHS</name>
<evidence type="ECO:0000255" key="1">
    <source>
        <dbReference type="HAMAP-Rule" id="MF_00560"/>
    </source>
</evidence>
<gene>
    <name evidence="1" type="primary">tam</name>
    <name type="ordered locus">EcHS_A1601</name>
</gene>